<gene>
    <name evidence="1" type="primary">pal</name>
    <name type="synonym">oprL</name>
    <name type="ordered locus">PA0973</name>
</gene>
<evidence type="ECO:0000255" key="1">
    <source>
        <dbReference type="HAMAP-Rule" id="MF_02204"/>
    </source>
</evidence>
<evidence type="ECO:0000256" key="2">
    <source>
        <dbReference type="SAM" id="MobiDB-lite"/>
    </source>
</evidence>
<dbReference type="EMBL" id="AE004091">
    <property type="protein sequence ID" value="AAG04362.1"/>
    <property type="molecule type" value="Genomic_DNA"/>
</dbReference>
<dbReference type="PIR" id="G83525">
    <property type="entry name" value="G83525"/>
</dbReference>
<dbReference type="PIR" id="S58217">
    <property type="entry name" value="S58217"/>
</dbReference>
<dbReference type="RefSeq" id="NP_249664.1">
    <property type="nucleotide sequence ID" value="NC_002516.2"/>
</dbReference>
<dbReference type="RefSeq" id="WP_003111417.1">
    <property type="nucleotide sequence ID" value="NZ_QZGE01000007.1"/>
</dbReference>
<dbReference type="SMR" id="Q9I4Z4"/>
<dbReference type="FunCoup" id="Q9I4Z4">
    <property type="interactions" value="132"/>
</dbReference>
<dbReference type="STRING" id="208964.PA0973"/>
<dbReference type="PaxDb" id="208964-PA0973"/>
<dbReference type="DNASU" id="882991"/>
<dbReference type="GeneID" id="882991"/>
<dbReference type="KEGG" id="pae:PA0973"/>
<dbReference type="PATRIC" id="fig|208964.12.peg.1011"/>
<dbReference type="PseudoCAP" id="PA0973"/>
<dbReference type="HOGENOM" id="CLU_016890_9_0_6"/>
<dbReference type="InParanoid" id="Q9I4Z4"/>
<dbReference type="OrthoDB" id="9809164at2"/>
<dbReference type="PhylomeDB" id="Q9I4Z4"/>
<dbReference type="BioCyc" id="PAER208964:G1FZ6-994-MONOMER"/>
<dbReference type="Proteomes" id="UP000002438">
    <property type="component" value="Chromosome"/>
</dbReference>
<dbReference type="GO" id="GO:0009279">
    <property type="term" value="C:cell outer membrane"/>
    <property type="evidence" value="ECO:0000318"/>
    <property type="project" value="GO_Central"/>
</dbReference>
<dbReference type="GO" id="GO:0051301">
    <property type="term" value="P:cell division"/>
    <property type="evidence" value="ECO:0007669"/>
    <property type="project" value="UniProtKB-UniRule"/>
</dbReference>
<dbReference type="CDD" id="cd07185">
    <property type="entry name" value="OmpA_C-like"/>
    <property type="match status" value="1"/>
</dbReference>
<dbReference type="FunFam" id="3.30.1330.60:FF:000001">
    <property type="entry name" value="Peptidoglycan-associated lipoprotein"/>
    <property type="match status" value="1"/>
</dbReference>
<dbReference type="Gene3D" id="3.30.1330.60">
    <property type="entry name" value="OmpA-like domain"/>
    <property type="match status" value="1"/>
</dbReference>
<dbReference type="HAMAP" id="MF_02204">
    <property type="entry name" value="Pal"/>
    <property type="match status" value="1"/>
</dbReference>
<dbReference type="InterPro" id="IPR050330">
    <property type="entry name" value="Bact_OuterMem_StrucFunc"/>
</dbReference>
<dbReference type="InterPro" id="IPR006664">
    <property type="entry name" value="OMP_bac"/>
</dbReference>
<dbReference type="InterPro" id="IPR006665">
    <property type="entry name" value="OmpA-like"/>
</dbReference>
<dbReference type="InterPro" id="IPR006690">
    <property type="entry name" value="OMPA-like_CS"/>
</dbReference>
<dbReference type="InterPro" id="IPR036737">
    <property type="entry name" value="OmpA-like_sf"/>
</dbReference>
<dbReference type="InterPro" id="IPR039001">
    <property type="entry name" value="Pal"/>
</dbReference>
<dbReference type="InterPro" id="IPR014169">
    <property type="entry name" value="Pal_lipo_C"/>
</dbReference>
<dbReference type="NCBIfam" id="TIGR02802">
    <property type="entry name" value="Pal_lipo"/>
    <property type="match status" value="1"/>
</dbReference>
<dbReference type="PANTHER" id="PTHR30329:SF21">
    <property type="entry name" value="LIPOPROTEIN YIAD-RELATED"/>
    <property type="match status" value="1"/>
</dbReference>
<dbReference type="PANTHER" id="PTHR30329">
    <property type="entry name" value="STATOR ELEMENT OF FLAGELLAR MOTOR COMPLEX"/>
    <property type="match status" value="1"/>
</dbReference>
<dbReference type="Pfam" id="PF00691">
    <property type="entry name" value="OmpA"/>
    <property type="match status" value="1"/>
</dbReference>
<dbReference type="PRINTS" id="PR01021">
    <property type="entry name" value="OMPADOMAIN"/>
</dbReference>
<dbReference type="SUPFAM" id="SSF103088">
    <property type="entry name" value="OmpA-like"/>
    <property type="match status" value="1"/>
</dbReference>
<dbReference type="PROSITE" id="PS01068">
    <property type="entry name" value="OMPA_1"/>
    <property type="match status" value="1"/>
</dbReference>
<dbReference type="PROSITE" id="PS51123">
    <property type="entry name" value="OMPA_2"/>
    <property type="match status" value="1"/>
</dbReference>
<dbReference type="PROSITE" id="PS51257">
    <property type="entry name" value="PROKAR_LIPOPROTEIN"/>
    <property type="match status" value="1"/>
</dbReference>
<accession>Q9I4Z4</accession>
<comment type="function">
    <text evidence="1">Part of the Tol-Pal system, which plays a role in outer membrane invagination during cell division and is important for maintaining outer membrane integrity.</text>
</comment>
<comment type="subunit">
    <text evidence="1">The Tol-Pal system is composed of five core proteins: the inner membrane proteins TolA, TolQ and TolR, the periplasmic protein TolB and the outer membrane protein Pal. They form a network linking the inner and outer membranes and the peptidoglycan layer.</text>
</comment>
<comment type="subcellular location">
    <subcellularLocation>
        <location evidence="1">Cell outer membrane</location>
        <topology evidence="1">Lipid-anchor</topology>
    </subcellularLocation>
</comment>
<comment type="similarity">
    <text evidence="1">Belongs to the Pal lipoprotein family.</text>
</comment>
<protein>
    <recommendedName>
        <fullName evidence="1">Peptidoglycan-associated lipoprotein</fullName>
        <shortName evidence="1">PAL</shortName>
    </recommendedName>
</protein>
<sequence>MEMLKFGKFAALALAMAVAVGCSSKGGDASGEGANGGVDPNAGYGANSGAVDGSLSDEAALRAITTFYFEYDSSDLKPEAMRALDVHAKDLKGSGQRVVLEGHTDERGTREYNMALGERRAKAVQRYLVLQGVSPAQLELVSYGKERPVATGHDEQSWAQNRRVELKK</sequence>
<proteinExistence type="inferred from homology"/>
<feature type="signal peptide" evidence="1">
    <location>
        <begin position="1"/>
        <end position="21"/>
    </location>
</feature>
<feature type="chain" id="PRO_0000287781" description="Peptidoglycan-associated lipoprotein" evidence="1">
    <location>
        <begin position="22"/>
        <end position="168"/>
    </location>
</feature>
<feature type="domain" description="OmpA-like" evidence="1">
    <location>
        <begin position="56"/>
        <end position="168"/>
    </location>
</feature>
<feature type="region of interest" description="Disordered" evidence="2">
    <location>
        <begin position="147"/>
        <end position="168"/>
    </location>
</feature>
<feature type="lipid moiety-binding region" description="N-palmitoyl cysteine" evidence="1">
    <location>
        <position position="22"/>
    </location>
</feature>
<feature type="lipid moiety-binding region" description="S-diacylglycerol cysteine" evidence="1">
    <location>
        <position position="22"/>
    </location>
</feature>
<reference key="1">
    <citation type="journal article" date="2000" name="Nature">
        <title>Complete genome sequence of Pseudomonas aeruginosa PAO1, an opportunistic pathogen.</title>
        <authorList>
            <person name="Stover C.K."/>
            <person name="Pham X.-Q.T."/>
            <person name="Erwin A.L."/>
            <person name="Mizoguchi S.D."/>
            <person name="Warrener P."/>
            <person name="Hickey M.J."/>
            <person name="Brinkman F.S.L."/>
            <person name="Hufnagle W.O."/>
            <person name="Kowalik D.J."/>
            <person name="Lagrou M."/>
            <person name="Garber R.L."/>
            <person name="Goltry L."/>
            <person name="Tolentino E."/>
            <person name="Westbrock-Wadman S."/>
            <person name="Yuan Y."/>
            <person name="Brody L.L."/>
            <person name="Coulter S.N."/>
            <person name="Folger K.R."/>
            <person name="Kas A."/>
            <person name="Larbig K."/>
            <person name="Lim R.M."/>
            <person name="Smith K.A."/>
            <person name="Spencer D.H."/>
            <person name="Wong G.K.-S."/>
            <person name="Wu Z."/>
            <person name="Paulsen I.T."/>
            <person name="Reizer J."/>
            <person name="Saier M.H. Jr."/>
            <person name="Hancock R.E.W."/>
            <person name="Lory S."/>
            <person name="Olson M.V."/>
        </authorList>
    </citation>
    <scope>NUCLEOTIDE SEQUENCE [LARGE SCALE GENOMIC DNA]</scope>
    <source>
        <strain>ATCC 15692 / DSM 22644 / CIP 104116 / JCM 14847 / LMG 12228 / 1C / PRS 101 / PAO1</strain>
    </source>
</reference>
<keyword id="KW-0131">Cell cycle</keyword>
<keyword id="KW-0132">Cell division</keyword>
<keyword id="KW-0998">Cell outer membrane</keyword>
<keyword id="KW-0449">Lipoprotein</keyword>
<keyword id="KW-0472">Membrane</keyword>
<keyword id="KW-0564">Palmitate</keyword>
<keyword id="KW-1185">Reference proteome</keyword>
<keyword id="KW-0732">Signal</keyword>
<name>PAL_PSEAE</name>
<organism>
    <name type="scientific">Pseudomonas aeruginosa (strain ATCC 15692 / DSM 22644 / CIP 104116 / JCM 14847 / LMG 12228 / 1C / PRS 101 / PAO1)</name>
    <dbReference type="NCBI Taxonomy" id="208964"/>
    <lineage>
        <taxon>Bacteria</taxon>
        <taxon>Pseudomonadati</taxon>
        <taxon>Pseudomonadota</taxon>
        <taxon>Gammaproteobacteria</taxon>
        <taxon>Pseudomonadales</taxon>
        <taxon>Pseudomonadaceae</taxon>
        <taxon>Pseudomonas</taxon>
    </lineage>
</organism>